<name>LIAS_DROME</name>
<keyword id="KW-0004">4Fe-4S</keyword>
<keyword id="KW-0408">Iron</keyword>
<keyword id="KW-0411">Iron-sulfur</keyword>
<keyword id="KW-0479">Metal-binding</keyword>
<keyword id="KW-0496">Mitochondrion</keyword>
<keyword id="KW-1185">Reference proteome</keyword>
<keyword id="KW-0949">S-adenosyl-L-methionine</keyword>
<keyword id="KW-0808">Transferase</keyword>
<accession>Q7JQW6</accession>
<accession>Q9VPF7</accession>
<gene>
    <name evidence="1" type="primary">Las</name>
    <name type="ORF">CG5231</name>
</gene>
<sequence>MLRALKTHAEAPIVVATRAASTNAEKLEEIRERLAKGPNFHDFVQNPDNTRNEWEQYDGKLRREKGEEQRLRLPPWLKTTIPVGKNYAKIKAQMRELKLSTVCEEARCPNIGECWGGGEHGTQTATIMLMGDTCTRGCRFCSVKTARKPPPLDVNEPVNTATAIASWGLDYIVLTSVDRDDLPDGGSEHIAETVREIKARNSNIFVECLVPDFRGNLECVKTIANSGLDVYAHNIETVEKLTPYVRDRRAHYRQTLQVLTEAKRFNPNLITKSSIMLGLGETDEEIENTLKDLREAGVDCVTLGQYMQPTNKHLKVIEYVTPEKFKHWEERGNELGFLYTASGPLVRSSYKAGEFFITSILENRKKRQNDTEVPKKQ</sequence>
<organism>
    <name type="scientific">Drosophila melanogaster</name>
    <name type="common">Fruit fly</name>
    <dbReference type="NCBI Taxonomy" id="7227"/>
    <lineage>
        <taxon>Eukaryota</taxon>
        <taxon>Metazoa</taxon>
        <taxon>Ecdysozoa</taxon>
        <taxon>Arthropoda</taxon>
        <taxon>Hexapoda</taxon>
        <taxon>Insecta</taxon>
        <taxon>Pterygota</taxon>
        <taxon>Neoptera</taxon>
        <taxon>Endopterygota</taxon>
        <taxon>Diptera</taxon>
        <taxon>Brachycera</taxon>
        <taxon>Muscomorpha</taxon>
        <taxon>Ephydroidea</taxon>
        <taxon>Drosophilidae</taxon>
        <taxon>Drosophila</taxon>
        <taxon>Sophophora</taxon>
    </lineage>
</organism>
<protein>
    <recommendedName>
        <fullName evidence="1">Lipoyl synthase, mitochondrial</fullName>
        <ecNumber evidence="1">2.8.1.8</ecNumber>
    </recommendedName>
    <alternativeName>
        <fullName evidence="1">Lipoate synthase</fullName>
        <shortName evidence="1">LS</shortName>
        <shortName evidence="1">Lip-syn</shortName>
    </alternativeName>
    <alternativeName>
        <fullName evidence="1">Lipoic acid synthase</fullName>
    </alternativeName>
</protein>
<comment type="function">
    <text evidence="1">Catalyzes the radical-mediated insertion of two sulfur atoms into the C-6 and C-8 positions of the octanoyl moiety bound to the lipoyl domains of lipoate-dependent enzymes, thereby converting the octanoylated domains into lipoylated derivatives.</text>
</comment>
<comment type="catalytic activity">
    <reaction evidence="1">
        <text>[[Fe-S] cluster scaffold protein carrying a second [4Fe-4S](2+) cluster] + N(6)-octanoyl-L-lysyl-[protein] + 2 oxidized [2Fe-2S]-[ferredoxin] + 2 S-adenosyl-L-methionine + 4 H(+) = [[Fe-S] cluster scaffold protein] + N(6)-[(R)-dihydrolipoyl]-L-lysyl-[protein] + 4 Fe(3+) + 2 hydrogen sulfide + 2 5'-deoxyadenosine + 2 L-methionine + 2 reduced [2Fe-2S]-[ferredoxin]</text>
        <dbReference type="Rhea" id="RHEA:16585"/>
        <dbReference type="Rhea" id="RHEA-COMP:9928"/>
        <dbReference type="Rhea" id="RHEA-COMP:10000"/>
        <dbReference type="Rhea" id="RHEA-COMP:10001"/>
        <dbReference type="Rhea" id="RHEA-COMP:10475"/>
        <dbReference type="Rhea" id="RHEA-COMP:14568"/>
        <dbReference type="Rhea" id="RHEA-COMP:14569"/>
        <dbReference type="ChEBI" id="CHEBI:15378"/>
        <dbReference type="ChEBI" id="CHEBI:17319"/>
        <dbReference type="ChEBI" id="CHEBI:29034"/>
        <dbReference type="ChEBI" id="CHEBI:29919"/>
        <dbReference type="ChEBI" id="CHEBI:33722"/>
        <dbReference type="ChEBI" id="CHEBI:33737"/>
        <dbReference type="ChEBI" id="CHEBI:33738"/>
        <dbReference type="ChEBI" id="CHEBI:57844"/>
        <dbReference type="ChEBI" id="CHEBI:59789"/>
        <dbReference type="ChEBI" id="CHEBI:78809"/>
        <dbReference type="ChEBI" id="CHEBI:83100"/>
        <dbReference type="EC" id="2.8.1.8"/>
    </reaction>
</comment>
<comment type="cofactor">
    <cofactor evidence="1">
        <name>[4Fe-4S] cluster</name>
        <dbReference type="ChEBI" id="CHEBI:49883"/>
    </cofactor>
    <text evidence="1">Binds 2 [4Fe-4S] clusters per subunit. One cluster is coordinated with 3 cysteines and an exchangeable S-adenosyl-L-methionine.</text>
</comment>
<comment type="pathway">
    <text evidence="1">Protein modification; protein lipoylation via endogenous pathway; protein N(6)-(lipoyl)lysine from octanoyl-[acyl-carrier-protein]: step 2/2.</text>
</comment>
<comment type="subcellular location">
    <subcellularLocation>
        <location evidence="1">Mitochondrion</location>
    </subcellularLocation>
</comment>
<comment type="miscellaneous">
    <text evidence="1">This protein may be expected to contain an N-terminal transit peptide but none has been predicted.</text>
</comment>
<comment type="similarity">
    <text evidence="1">Belongs to the radical SAM superfamily. Lipoyl synthase family.</text>
</comment>
<comment type="sequence caution" evidence="3">
    <conflict type="erroneous initiation">
        <sequence resource="EMBL-CDS" id="AAL13786"/>
    </conflict>
    <text>Extended N-terminus.</text>
</comment>
<comment type="sequence caution" evidence="3">
    <conflict type="erroneous initiation">
        <sequence resource="EMBL-CDS" id="AAO41414"/>
    </conflict>
    <text>Extended N-terminus.</text>
</comment>
<dbReference type="EC" id="2.8.1.8" evidence="1"/>
<dbReference type="EMBL" id="AE014296">
    <property type="protein sequence ID" value="AAF51596.2"/>
    <property type="molecule type" value="Genomic_DNA"/>
</dbReference>
<dbReference type="EMBL" id="AY058557">
    <property type="protein sequence ID" value="AAL13786.1"/>
    <property type="status" value="ALT_INIT"/>
    <property type="molecule type" value="mRNA"/>
</dbReference>
<dbReference type="EMBL" id="BT003750">
    <property type="protein sequence ID" value="AAO41414.1"/>
    <property type="status" value="ALT_INIT"/>
    <property type="molecule type" value="mRNA"/>
</dbReference>
<dbReference type="RefSeq" id="NP_524183.2">
    <property type="nucleotide sequence ID" value="NM_079459.3"/>
</dbReference>
<dbReference type="SMR" id="Q7JQW6"/>
<dbReference type="BioGRID" id="65517">
    <property type="interactions" value="1"/>
</dbReference>
<dbReference type="FunCoup" id="Q7JQW6">
    <property type="interactions" value="1822"/>
</dbReference>
<dbReference type="IntAct" id="Q7JQW6">
    <property type="interactions" value="1"/>
</dbReference>
<dbReference type="STRING" id="7227.FBpp0288705"/>
<dbReference type="PaxDb" id="7227-FBpp0288705"/>
<dbReference type="DNASU" id="40259"/>
<dbReference type="EnsemblMetazoa" id="FBtr0290266">
    <property type="protein sequence ID" value="FBpp0288705"/>
    <property type="gene ID" value="FBgn0029158"/>
</dbReference>
<dbReference type="GeneID" id="40259"/>
<dbReference type="KEGG" id="dme:Dmel_CG5231"/>
<dbReference type="AGR" id="FB:FBgn0029158"/>
<dbReference type="CTD" id="40259"/>
<dbReference type="FlyBase" id="FBgn0029158">
    <property type="gene designation" value="Las"/>
</dbReference>
<dbReference type="VEuPathDB" id="VectorBase:FBgn0029158"/>
<dbReference type="eggNOG" id="KOG2672">
    <property type="taxonomic scope" value="Eukaryota"/>
</dbReference>
<dbReference type="GeneTree" id="ENSGT00390000006234"/>
<dbReference type="HOGENOM" id="CLU_033144_1_2_1"/>
<dbReference type="InParanoid" id="Q7JQW6"/>
<dbReference type="OMA" id="PYCDIDF"/>
<dbReference type="OrthoDB" id="3231at2759"/>
<dbReference type="PhylomeDB" id="Q7JQW6"/>
<dbReference type="Reactome" id="R-DME-9857492">
    <property type="pathway name" value="Protein lipoylation"/>
</dbReference>
<dbReference type="UniPathway" id="UPA00538">
    <property type="reaction ID" value="UER00593"/>
</dbReference>
<dbReference type="BioGRID-ORCS" id="40259">
    <property type="hits" value="1 hit in 3 CRISPR screens"/>
</dbReference>
<dbReference type="ChiTaRS" id="Las">
    <property type="organism name" value="fly"/>
</dbReference>
<dbReference type="GenomeRNAi" id="40259"/>
<dbReference type="PRO" id="PR:Q7JQW6"/>
<dbReference type="Proteomes" id="UP000000803">
    <property type="component" value="Chromosome 3L"/>
</dbReference>
<dbReference type="Bgee" id="FBgn0029158">
    <property type="expression patterns" value="Expressed in adult hindgut (Drosophila) and 118 other cell types or tissues"/>
</dbReference>
<dbReference type="GO" id="GO:0005739">
    <property type="term" value="C:mitochondrion"/>
    <property type="evidence" value="ECO:0000318"/>
    <property type="project" value="GO_Central"/>
</dbReference>
<dbReference type="GO" id="GO:0051539">
    <property type="term" value="F:4 iron, 4 sulfur cluster binding"/>
    <property type="evidence" value="ECO:0007669"/>
    <property type="project" value="UniProtKB-UniRule"/>
</dbReference>
<dbReference type="GO" id="GO:0016992">
    <property type="term" value="F:lipoate synthase activity"/>
    <property type="evidence" value="ECO:0000318"/>
    <property type="project" value="GO_Central"/>
</dbReference>
<dbReference type="GO" id="GO:0046872">
    <property type="term" value="F:metal ion binding"/>
    <property type="evidence" value="ECO:0007669"/>
    <property type="project" value="UniProtKB-KW"/>
</dbReference>
<dbReference type="GO" id="GO:0009107">
    <property type="term" value="P:lipoate biosynthetic process"/>
    <property type="evidence" value="ECO:0000318"/>
    <property type="project" value="GO_Central"/>
</dbReference>
<dbReference type="CDD" id="cd01335">
    <property type="entry name" value="Radical_SAM"/>
    <property type="match status" value="1"/>
</dbReference>
<dbReference type="FunFam" id="3.20.20.70:FF:000036">
    <property type="entry name" value="Lipoyl synthase, mitochondrial"/>
    <property type="match status" value="1"/>
</dbReference>
<dbReference type="Gene3D" id="3.20.20.70">
    <property type="entry name" value="Aldolase class I"/>
    <property type="match status" value="1"/>
</dbReference>
<dbReference type="HAMAP" id="MF_00206">
    <property type="entry name" value="Lipoyl_synth"/>
    <property type="match status" value="1"/>
</dbReference>
<dbReference type="InterPro" id="IPR013785">
    <property type="entry name" value="Aldolase_TIM"/>
</dbReference>
<dbReference type="InterPro" id="IPR006638">
    <property type="entry name" value="Elp3/MiaA/NifB-like_rSAM"/>
</dbReference>
<dbReference type="InterPro" id="IPR031691">
    <property type="entry name" value="LIAS_N"/>
</dbReference>
<dbReference type="InterPro" id="IPR003698">
    <property type="entry name" value="Lipoyl_synth"/>
</dbReference>
<dbReference type="InterPro" id="IPR007197">
    <property type="entry name" value="rSAM"/>
</dbReference>
<dbReference type="NCBIfam" id="TIGR00510">
    <property type="entry name" value="lipA"/>
    <property type="match status" value="1"/>
</dbReference>
<dbReference type="NCBIfam" id="NF004019">
    <property type="entry name" value="PRK05481.1"/>
    <property type="match status" value="1"/>
</dbReference>
<dbReference type="NCBIfam" id="NF009544">
    <property type="entry name" value="PRK12928.1"/>
    <property type="match status" value="1"/>
</dbReference>
<dbReference type="PANTHER" id="PTHR10949">
    <property type="entry name" value="LIPOYL SYNTHASE"/>
    <property type="match status" value="1"/>
</dbReference>
<dbReference type="PANTHER" id="PTHR10949:SF0">
    <property type="entry name" value="LIPOYL SYNTHASE, MITOCHONDRIAL"/>
    <property type="match status" value="1"/>
</dbReference>
<dbReference type="Pfam" id="PF16881">
    <property type="entry name" value="LIAS_N"/>
    <property type="match status" value="1"/>
</dbReference>
<dbReference type="Pfam" id="PF04055">
    <property type="entry name" value="Radical_SAM"/>
    <property type="match status" value="1"/>
</dbReference>
<dbReference type="PIRSF" id="PIRSF005963">
    <property type="entry name" value="Lipoyl_synth"/>
    <property type="match status" value="1"/>
</dbReference>
<dbReference type="SFLD" id="SFLDF00271">
    <property type="entry name" value="lipoyl_synthase"/>
    <property type="match status" value="1"/>
</dbReference>
<dbReference type="SFLD" id="SFLDS00029">
    <property type="entry name" value="Radical_SAM"/>
    <property type="match status" value="1"/>
</dbReference>
<dbReference type="SMART" id="SM00729">
    <property type="entry name" value="Elp3"/>
    <property type="match status" value="1"/>
</dbReference>
<dbReference type="SUPFAM" id="SSF102114">
    <property type="entry name" value="Radical SAM enzymes"/>
    <property type="match status" value="1"/>
</dbReference>
<dbReference type="PROSITE" id="PS51918">
    <property type="entry name" value="RADICAL_SAM"/>
    <property type="match status" value="1"/>
</dbReference>
<proteinExistence type="evidence at transcript level"/>
<reference key="1">
    <citation type="journal article" date="2000" name="Science">
        <title>The genome sequence of Drosophila melanogaster.</title>
        <authorList>
            <person name="Adams M.D."/>
            <person name="Celniker S.E."/>
            <person name="Holt R.A."/>
            <person name="Evans C.A."/>
            <person name="Gocayne J.D."/>
            <person name="Amanatides P.G."/>
            <person name="Scherer S.E."/>
            <person name="Li P.W."/>
            <person name="Hoskins R.A."/>
            <person name="Galle R.F."/>
            <person name="George R.A."/>
            <person name="Lewis S.E."/>
            <person name="Richards S."/>
            <person name="Ashburner M."/>
            <person name="Henderson S.N."/>
            <person name="Sutton G.G."/>
            <person name="Wortman J.R."/>
            <person name="Yandell M.D."/>
            <person name="Zhang Q."/>
            <person name="Chen L.X."/>
            <person name="Brandon R.C."/>
            <person name="Rogers Y.-H.C."/>
            <person name="Blazej R.G."/>
            <person name="Champe M."/>
            <person name="Pfeiffer B.D."/>
            <person name="Wan K.H."/>
            <person name="Doyle C."/>
            <person name="Baxter E.G."/>
            <person name="Helt G."/>
            <person name="Nelson C.R."/>
            <person name="Miklos G.L.G."/>
            <person name="Abril J.F."/>
            <person name="Agbayani A."/>
            <person name="An H.-J."/>
            <person name="Andrews-Pfannkoch C."/>
            <person name="Baldwin D."/>
            <person name="Ballew R.M."/>
            <person name="Basu A."/>
            <person name="Baxendale J."/>
            <person name="Bayraktaroglu L."/>
            <person name="Beasley E.M."/>
            <person name="Beeson K.Y."/>
            <person name="Benos P.V."/>
            <person name="Berman B.P."/>
            <person name="Bhandari D."/>
            <person name="Bolshakov S."/>
            <person name="Borkova D."/>
            <person name="Botchan M.R."/>
            <person name="Bouck J."/>
            <person name="Brokstein P."/>
            <person name="Brottier P."/>
            <person name="Burtis K.C."/>
            <person name="Busam D.A."/>
            <person name="Butler H."/>
            <person name="Cadieu E."/>
            <person name="Center A."/>
            <person name="Chandra I."/>
            <person name="Cherry J.M."/>
            <person name="Cawley S."/>
            <person name="Dahlke C."/>
            <person name="Davenport L.B."/>
            <person name="Davies P."/>
            <person name="de Pablos B."/>
            <person name="Delcher A."/>
            <person name="Deng Z."/>
            <person name="Mays A.D."/>
            <person name="Dew I."/>
            <person name="Dietz S.M."/>
            <person name="Dodson K."/>
            <person name="Doup L.E."/>
            <person name="Downes M."/>
            <person name="Dugan-Rocha S."/>
            <person name="Dunkov B.C."/>
            <person name="Dunn P."/>
            <person name="Durbin K.J."/>
            <person name="Evangelista C.C."/>
            <person name="Ferraz C."/>
            <person name="Ferriera S."/>
            <person name="Fleischmann W."/>
            <person name="Fosler C."/>
            <person name="Gabrielian A.E."/>
            <person name="Garg N.S."/>
            <person name="Gelbart W.M."/>
            <person name="Glasser K."/>
            <person name="Glodek A."/>
            <person name="Gong F."/>
            <person name="Gorrell J.H."/>
            <person name="Gu Z."/>
            <person name="Guan P."/>
            <person name="Harris M."/>
            <person name="Harris N.L."/>
            <person name="Harvey D.A."/>
            <person name="Heiman T.J."/>
            <person name="Hernandez J.R."/>
            <person name="Houck J."/>
            <person name="Hostin D."/>
            <person name="Houston K.A."/>
            <person name="Howland T.J."/>
            <person name="Wei M.-H."/>
            <person name="Ibegwam C."/>
            <person name="Jalali M."/>
            <person name="Kalush F."/>
            <person name="Karpen G.H."/>
            <person name="Ke Z."/>
            <person name="Kennison J.A."/>
            <person name="Ketchum K.A."/>
            <person name="Kimmel B.E."/>
            <person name="Kodira C.D."/>
            <person name="Kraft C.L."/>
            <person name="Kravitz S."/>
            <person name="Kulp D."/>
            <person name="Lai Z."/>
            <person name="Lasko P."/>
            <person name="Lei Y."/>
            <person name="Levitsky A.A."/>
            <person name="Li J.H."/>
            <person name="Li Z."/>
            <person name="Liang Y."/>
            <person name="Lin X."/>
            <person name="Liu X."/>
            <person name="Mattei B."/>
            <person name="McIntosh T.C."/>
            <person name="McLeod M.P."/>
            <person name="McPherson D."/>
            <person name="Merkulov G."/>
            <person name="Milshina N.V."/>
            <person name="Mobarry C."/>
            <person name="Morris J."/>
            <person name="Moshrefi A."/>
            <person name="Mount S.M."/>
            <person name="Moy M."/>
            <person name="Murphy B."/>
            <person name="Murphy L."/>
            <person name="Muzny D.M."/>
            <person name="Nelson D.L."/>
            <person name="Nelson D.R."/>
            <person name="Nelson K.A."/>
            <person name="Nixon K."/>
            <person name="Nusskern D.R."/>
            <person name="Pacleb J.M."/>
            <person name="Palazzolo M."/>
            <person name="Pittman G.S."/>
            <person name="Pan S."/>
            <person name="Pollard J."/>
            <person name="Puri V."/>
            <person name="Reese M.G."/>
            <person name="Reinert K."/>
            <person name="Remington K."/>
            <person name="Saunders R.D.C."/>
            <person name="Scheeler F."/>
            <person name="Shen H."/>
            <person name="Shue B.C."/>
            <person name="Siden-Kiamos I."/>
            <person name="Simpson M."/>
            <person name="Skupski M.P."/>
            <person name="Smith T.J."/>
            <person name="Spier E."/>
            <person name="Spradling A.C."/>
            <person name="Stapleton M."/>
            <person name="Strong R."/>
            <person name="Sun E."/>
            <person name="Svirskas R."/>
            <person name="Tector C."/>
            <person name="Turner R."/>
            <person name="Venter E."/>
            <person name="Wang A.H."/>
            <person name="Wang X."/>
            <person name="Wang Z.-Y."/>
            <person name="Wassarman D.A."/>
            <person name="Weinstock G.M."/>
            <person name="Weissenbach J."/>
            <person name="Williams S.M."/>
            <person name="Woodage T."/>
            <person name="Worley K.C."/>
            <person name="Wu D."/>
            <person name="Yang S."/>
            <person name="Yao Q.A."/>
            <person name="Ye J."/>
            <person name="Yeh R.-F."/>
            <person name="Zaveri J.S."/>
            <person name="Zhan M."/>
            <person name="Zhang G."/>
            <person name="Zhao Q."/>
            <person name="Zheng L."/>
            <person name="Zheng X.H."/>
            <person name="Zhong F.N."/>
            <person name="Zhong W."/>
            <person name="Zhou X."/>
            <person name="Zhu S.C."/>
            <person name="Zhu X."/>
            <person name="Smith H.O."/>
            <person name="Gibbs R.A."/>
            <person name="Myers E.W."/>
            <person name="Rubin G.M."/>
            <person name="Venter J.C."/>
        </authorList>
    </citation>
    <scope>NUCLEOTIDE SEQUENCE [LARGE SCALE GENOMIC DNA]</scope>
    <source>
        <strain>Berkeley</strain>
    </source>
</reference>
<reference key="2">
    <citation type="journal article" date="2002" name="Genome Biol.">
        <title>Annotation of the Drosophila melanogaster euchromatic genome: a systematic review.</title>
        <authorList>
            <person name="Misra S."/>
            <person name="Crosby M.A."/>
            <person name="Mungall C.J."/>
            <person name="Matthews B.B."/>
            <person name="Campbell K.S."/>
            <person name="Hradecky P."/>
            <person name="Huang Y."/>
            <person name="Kaminker J.S."/>
            <person name="Millburn G.H."/>
            <person name="Prochnik S.E."/>
            <person name="Smith C.D."/>
            <person name="Tupy J.L."/>
            <person name="Whitfield E.J."/>
            <person name="Bayraktaroglu L."/>
            <person name="Berman B.P."/>
            <person name="Bettencourt B.R."/>
            <person name="Celniker S.E."/>
            <person name="de Grey A.D.N.J."/>
            <person name="Drysdale R.A."/>
            <person name="Harris N.L."/>
            <person name="Richter J."/>
            <person name="Russo S."/>
            <person name="Schroeder A.J."/>
            <person name="Shu S.Q."/>
            <person name="Stapleton M."/>
            <person name="Yamada C."/>
            <person name="Ashburner M."/>
            <person name="Gelbart W.M."/>
            <person name="Rubin G.M."/>
            <person name="Lewis S.E."/>
        </authorList>
    </citation>
    <scope>GENOME REANNOTATION</scope>
    <source>
        <strain>Berkeley</strain>
    </source>
</reference>
<reference key="3">
    <citation type="journal article" date="2002" name="Genome Biol.">
        <title>A Drosophila full-length cDNA resource.</title>
        <authorList>
            <person name="Stapleton M."/>
            <person name="Carlson J.W."/>
            <person name="Brokstein P."/>
            <person name="Yu C."/>
            <person name="Champe M."/>
            <person name="George R.A."/>
            <person name="Guarin H."/>
            <person name="Kronmiller B."/>
            <person name="Pacleb J.M."/>
            <person name="Park S."/>
            <person name="Wan K.H."/>
            <person name="Rubin G.M."/>
            <person name="Celniker S.E."/>
        </authorList>
    </citation>
    <scope>NUCLEOTIDE SEQUENCE [LARGE SCALE MRNA]</scope>
    <source>
        <strain>Berkeley</strain>
        <tissue>Embryo</tissue>
    </source>
</reference>
<reference key="4">
    <citation type="submission" date="2003-02" db="EMBL/GenBank/DDBJ databases">
        <authorList>
            <person name="Stapleton M."/>
            <person name="Brokstein P."/>
            <person name="Hong L."/>
            <person name="Agbayani A."/>
            <person name="Carlson J."/>
            <person name="Champe M."/>
            <person name="Chavez C."/>
            <person name="Dorsett V."/>
            <person name="Dresnek D."/>
            <person name="Farfan D."/>
            <person name="Frise E."/>
            <person name="George R."/>
            <person name="Gonzalez M."/>
            <person name="Guarin H."/>
            <person name="Kronmiller B."/>
            <person name="Li P."/>
            <person name="Liao G."/>
            <person name="Miranda A."/>
            <person name="Mungall C.J."/>
            <person name="Nunoo J."/>
            <person name="Pacleb J."/>
            <person name="Paragas V."/>
            <person name="Park S."/>
            <person name="Patel S."/>
            <person name="Phouanenavong S."/>
            <person name="Wan K."/>
            <person name="Yu C."/>
            <person name="Lewis S.E."/>
            <person name="Rubin G.M."/>
            <person name="Celniker S.E."/>
        </authorList>
    </citation>
    <scope>NUCLEOTIDE SEQUENCE [LARGE SCALE MRNA]</scope>
    <source>
        <strain>Berkeley</strain>
    </source>
</reference>
<feature type="chain" id="PRO_0000398219" description="Lipoyl synthase, mitochondrial">
    <location>
        <begin position="1"/>
        <end position="377"/>
    </location>
</feature>
<feature type="domain" description="Radical SAM core" evidence="2">
    <location>
        <begin position="119"/>
        <end position="338"/>
    </location>
</feature>
<feature type="binding site" evidence="1">
    <location>
        <position position="103"/>
    </location>
    <ligand>
        <name>[4Fe-4S] cluster</name>
        <dbReference type="ChEBI" id="CHEBI:49883"/>
        <label>1</label>
    </ligand>
</feature>
<feature type="binding site" evidence="1">
    <location>
        <position position="108"/>
    </location>
    <ligand>
        <name>[4Fe-4S] cluster</name>
        <dbReference type="ChEBI" id="CHEBI:49883"/>
        <label>1</label>
    </ligand>
</feature>
<feature type="binding site" evidence="1">
    <location>
        <position position="114"/>
    </location>
    <ligand>
        <name>[4Fe-4S] cluster</name>
        <dbReference type="ChEBI" id="CHEBI:49883"/>
        <label>1</label>
    </ligand>
</feature>
<feature type="binding site" evidence="1">
    <location>
        <position position="134"/>
    </location>
    <ligand>
        <name>[4Fe-4S] cluster</name>
        <dbReference type="ChEBI" id="CHEBI:49883"/>
        <label>2</label>
        <note>4Fe-4S-S-AdoMet</note>
    </ligand>
</feature>
<feature type="binding site" evidence="1">
    <location>
        <position position="138"/>
    </location>
    <ligand>
        <name>[4Fe-4S] cluster</name>
        <dbReference type="ChEBI" id="CHEBI:49883"/>
        <label>2</label>
        <note>4Fe-4S-S-AdoMet</note>
    </ligand>
</feature>
<feature type="binding site" evidence="1">
    <location>
        <position position="141"/>
    </location>
    <ligand>
        <name>[4Fe-4S] cluster</name>
        <dbReference type="ChEBI" id="CHEBI:49883"/>
        <label>2</label>
        <note>4Fe-4S-S-AdoMet</note>
    </ligand>
</feature>
<feature type="binding site" evidence="1">
    <location>
        <position position="349"/>
    </location>
    <ligand>
        <name>[4Fe-4S] cluster</name>
        <dbReference type="ChEBI" id="CHEBI:49883"/>
        <label>1</label>
    </ligand>
</feature>
<evidence type="ECO:0000255" key="1">
    <source>
        <dbReference type="HAMAP-Rule" id="MF_03123"/>
    </source>
</evidence>
<evidence type="ECO:0000255" key="2">
    <source>
        <dbReference type="PROSITE-ProRule" id="PRU01266"/>
    </source>
</evidence>
<evidence type="ECO:0000305" key="3"/>